<organism>
    <name type="scientific">Bacillus cereus (strain ATCC 14579 / DSM 31 / CCUG 7414 / JCM 2152 / NBRC 15305 / NCIMB 9373 / NCTC 2599 / NRRL B-3711)</name>
    <dbReference type="NCBI Taxonomy" id="226900"/>
    <lineage>
        <taxon>Bacteria</taxon>
        <taxon>Bacillati</taxon>
        <taxon>Bacillota</taxon>
        <taxon>Bacilli</taxon>
        <taxon>Bacillales</taxon>
        <taxon>Bacillaceae</taxon>
        <taxon>Bacillus</taxon>
        <taxon>Bacillus cereus group</taxon>
    </lineage>
</organism>
<name>RL1_BACCR</name>
<keyword id="KW-1185">Reference proteome</keyword>
<keyword id="KW-0678">Repressor</keyword>
<keyword id="KW-0687">Ribonucleoprotein</keyword>
<keyword id="KW-0689">Ribosomal protein</keyword>
<keyword id="KW-0694">RNA-binding</keyword>
<keyword id="KW-0699">rRNA-binding</keyword>
<keyword id="KW-0810">Translation regulation</keyword>
<keyword id="KW-0820">tRNA-binding</keyword>
<accession>Q81J52</accession>
<protein>
    <recommendedName>
        <fullName evidence="1">Large ribosomal subunit protein uL1</fullName>
    </recommendedName>
    <alternativeName>
        <fullName evidence="2">50S ribosomal protein L1</fullName>
    </alternativeName>
</protein>
<comment type="function">
    <text evidence="1">Binds directly to 23S rRNA. The L1 stalk is quite mobile in the ribosome, and is involved in E site tRNA release.</text>
</comment>
<comment type="function">
    <text evidence="1">Protein L1 is also a translational repressor protein, it controls the translation of the L11 operon by binding to its mRNA.</text>
</comment>
<comment type="subunit">
    <text evidence="1">Part of the 50S ribosomal subunit.</text>
</comment>
<comment type="similarity">
    <text evidence="1">Belongs to the universal ribosomal protein uL1 family.</text>
</comment>
<sequence>MKMAKRGKKYVEAAKLVDRAAAYSATEAVELVKKTNTAKFDATVEAAFRLGVDPKKADQQIRGAVVLPHGTGKVQRVLVFAKGEKAKEAEAAGADFVGDTDYIGKIQQGWFDFDVVVATPDMMGEVGKLGRVLGPKGLMPNPKTGTVTFDVTKAVNEIKAGKVEYRVDKAGNIHVPIGKVSFEDAKLVENFKTIADTLQKVKPAAAKGTYMKNVTVASTMGPGVRVDVSTLA</sequence>
<evidence type="ECO:0000255" key="1">
    <source>
        <dbReference type="HAMAP-Rule" id="MF_01318"/>
    </source>
</evidence>
<evidence type="ECO:0000305" key="2"/>
<reference key="1">
    <citation type="journal article" date="2003" name="Nature">
        <title>Genome sequence of Bacillus cereus and comparative analysis with Bacillus anthracis.</title>
        <authorList>
            <person name="Ivanova N."/>
            <person name="Sorokin A."/>
            <person name="Anderson I."/>
            <person name="Galleron N."/>
            <person name="Candelon B."/>
            <person name="Kapatral V."/>
            <person name="Bhattacharyya A."/>
            <person name="Reznik G."/>
            <person name="Mikhailova N."/>
            <person name="Lapidus A."/>
            <person name="Chu L."/>
            <person name="Mazur M."/>
            <person name="Goltsman E."/>
            <person name="Larsen N."/>
            <person name="D'Souza M."/>
            <person name="Walunas T."/>
            <person name="Grechkin Y."/>
            <person name="Pusch G."/>
            <person name="Haselkorn R."/>
            <person name="Fonstein M."/>
            <person name="Ehrlich S.D."/>
            <person name="Overbeek R."/>
            <person name="Kyrpides N.C."/>
        </authorList>
    </citation>
    <scope>NUCLEOTIDE SEQUENCE [LARGE SCALE GENOMIC DNA]</scope>
    <source>
        <strain>ATCC 14579 / DSM 31 / CCUG 7414 / JCM 2152 / NBRC 15305 / NCIMB 9373 / NCTC 2599 / NRRL B-3711</strain>
    </source>
</reference>
<gene>
    <name evidence="1" type="primary">rplA</name>
    <name type="ordered locus">BC_0118</name>
</gene>
<dbReference type="EMBL" id="AE016877">
    <property type="protein sequence ID" value="AAP07200.1"/>
    <property type="molecule type" value="Genomic_DNA"/>
</dbReference>
<dbReference type="SMR" id="Q81J52"/>
<dbReference type="STRING" id="226900.BC_0118"/>
<dbReference type="MetOSite" id="Q81J52"/>
<dbReference type="KEGG" id="bce:BC0118"/>
<dbReference type="HOGENOM" id="CLU_062853_0_0_9"/>
<dbReference type="Proteomes" id="UP000001417">
    <property type="component" value="Chromosome"/>
</dbReference>
<dbReference type="GO" id="GO:0015934">
    <property type="term" value="C:large ribosomal subunit"/>
    <property type="evidence" value="ECO:0007669"/>
    <property type="project" value="InterPro"/>
</dbReference>
<dbReference type="GO" id="GO:0019843">
    <property type="term" value="F:rRNA binding"/>
    <property type="evidence" value="ECO:0007669"/>
    <property type="project" value="UniProtKB-UniRule"/>
</dbReference>
<dbReference type="GO" id="GO:0003735">
    <property type="term" value="F:structural constituent of ribosome"/>
    <property type="evidence" value="ECO:0007669"/>
    <property type="project" value="InterPro"/>
</dbReference>
<dbReference type="GO" id="GO:0000049">
    <property type="term" value="F:tRNA binding"/>
    <property type="evidence" value="ECO:0007669"/>
    <property type="project" value="UniProtKB-KW"/>
</dbReference>
<dbReference type="GO" id="GO:0006417">
    <property type="term" value="P:regulation of translation"/>
    <property type="evidence" value="ECO:0007669"/>
    <property type="project" value="UniProtKB-KW"/>
</dbReference>
<dbReference type="GO" id="GO:0006412">
    <property type="term" value="P:translation"/>
    <property type="evidence" value="ECO:0007669"/>
    <property type="project" value="UniProtKB-UniRule"/>
</dbReference>
<dbReference type="CDD" id="cd00403">
    <property type="entry name" value="Ribosomal_L1"/>
    <property type="match status" value="1"/>
</dbReference>
<dbReference type="FunFam" id="3.40.50.790:FF:000001">
    <property type="entry name" value="50S ribosomal protein L1"/>
    <property type="match status" value="1"/>
</dbReference>
<dbReference type="Gene3D" id="3.30.190.20">
    <property type="match status" value="1"/>
</dbReference>
<dbReference type="Gene3D" id="3.40.50.790">
    <property type="match status" value="1"/>
</dbReference>
<dbReference type="HAMAP" id="MF_01318_B">
    <property type="entry name" value="Ribosomal_uL1_B"/>
    <property type="match status" value="1"/>
</dbReference>
<dbReference type="InterPro" id="IPR005878">
    <property type="entry name" value="Ribosom_uL1_bac-type"/>
</dbReference>
<dbReference type="InterPro" id="IPR002143">
    <property type="entry name" value="Ribosomal_uL1"/>
</dbReference>
<dbReference type="InterPro" id="IPR023674">
    <property type="entry name" value="Ribosomal_uL1-like"/>
</dbReference>
<dbReference type="InterPro" id="IPR028364">
    <property type="entry name" value="Ribosomal_uL1/biogenesis"/>
</dbReference>
<dbReference type="InterPro" id="IPR016095">
    <property type="entry name" value="Ribosomal_uL1_3-a/b-sand"/>
</dbReference>
<dbReference type="InterPro" id="IPR023673">
    <property type="entry name" value="Ribosomal_uL1_CS"/>
</dbReference>
<dbReference type="NCBIfam" id="TIGR01169">
    <property type="entry name" value="rplA_bact"/>
    <property type="match status" value="1"/>
</dbReference>
<dbReference type="PANTHER" id="PTHR36427">
    <property type="entry name" value="54S RIBOSOMAL PROTEIN L1, MITOCHONDRIAL"/>
    <property type="match status" value="1"/>
</dbReference>
<dbReference type="PANTHER" id="PTHR36427:SF3">
    <property type="entry name" value="LARGE RIBOSOMAL SUBUNIT PROTEIN UL1M"/>
    <property type="match status" value="1"/>
</dbReference>
<dbReference type="Pfam" id="PF00687">
    <property type="entry name" value="Ribosomal_L1"/>
    <property type="match status" value="1"/>
</dbReference>
<dbReference type="PIRSF" id="PIRSF002155">
    <property type="entry name" value="Ribosomal_L1"/>
    <property type="match status" value="1"/>
</dbReference>
<dbReference type="SUPFAM" id="SSF56808">
    <property type="entry name" value="Ribosomal protein L1"/>
    <property type="match status" value="1"/>
</dbReference>
<dbReference type="PROSITE" id="PS01199">
    <property type="entry name" value="RIBOSOMAL_L1"/>
    <property type="match status" value="1"/>
</dbReference>
<feature type="chain" id="PRO_0000125609" description="Large ribosomal subunit protein uL1">
    <location>
        <begin position="1"/>
        <end position="232"/>
    </location>
</feature>
<proteinExistence type="inferred from homology"/>